<sequence length="387" mass="44107">MPHSIDMEDSSAIAERSKHAGLALEPEACFNLPQPTAEDRQDNWQTQYHSSEGAQGGSRKAQAADATTGNPTVDDASQQNGLLQQWVKQGYFMPAEHGSKAGNDVKHKYSPPKSDVWGVLVACTVITTWAALFYHSIFQIKLPSIEQLRSGNYNPSDFTSWPHVLLAFFSLEFLYTGLFITTHDAMHGTIAMRHRKLNDFLGSFAISLYAWFDYKMLHKKHWEHHNHTGKVGADPDFHRGNPSILPWFARFMMEYSSLWQFAKIAWWATGMQLLGAPFQNILMFMTAAPILSAFRLFYYGTYIPHHPEPGPASDKVEMDWTMSRTSTAPSLLSFLTCYHFDLHWEHHRWPYAPWWQLPVCRKLAGRTNPLHTEALQTAEPSRLEHGG</sequence>
<proteinExistence type="evidence at protein level"/>
<comment type="function">
    <text evidence="2">Involved in the biosynthesis of ketocarotenoids which are powerful anti-oxidative molecules (PubMed:22526507). Catalyzes the conversion of beta-carotene to canthaxanthin via echinenone (PubMed:22526507).</text>
</comment>
<comment type="catalytic activity">
    <reaction evidence="2">
        <text>echinenone + 2 AH2 + 2 O2 = canthaxanthin + 2 A + 3 H2O</text>
        <dbReference type="Rhea" id="RHEA:55664"/>
        <dbReference type="ChEBI" id="CHEBI:3362"/>
        <dbReference type="ChEBI" id="CHEBI:4746"/>
        <dbReference type="ChEBI" id="CHEBI:13193"/>
        <dbReference type="ChEBI" id="CHEBI:15377"/>
        <dbReference type="ChEBI" id="CHEBI:15379"/>
        <dbReference type="ChEBI" id="CHEBI:17499"/>
        <dbReference type="EC" id="1.14.99.63"/>
    </reaction>
    <physiologicalReaction direction="left-to-right" evidence="2">
        <dbReference type="Rhea" id="RHEA:55665"/>
    </physiologicalReaction>
</comment>
<comment type="catalytic activity">
    <reaction evidence="2">
        <text>all-trans-beta-carotene + 2 AH2 + 2 O2 = echinenone + 2 A + 3 H2O</text>
        <dbReference type="Rhea" id="RHEA:55660"/>
        <dbReference type="ChEBI" id="CHEBI:4746"/>
        <dbReference type="ChEBI" id="CHEBI:13193"/>
        <dbReference type="ChEBI" id="CHEBI:15377"/>
        <dbReference type="ChEBI" id="CHEBI:15379"/>
        <dbReference type="ChEBI" id="CHEBI:17499"/>
        <dbReference type="ChEBI" id="CHEBI:17579"/>
        <dbReference type="EC" id="1.14.99.63"/>
    </reaction>
    <physiologicalReaction direction="left-to-right" evidence="2">
        <dbReference type="Rhea" id="RHEA:55661"/>
    </physiologicalReaction>
</comment>
<comment type="pathway">
    <text evidence="4">Carotenoid biosynthesis.</text>
</comment>
<keyword id="KW-0125">Carotenoid biosynthesis</keyword>
<keyword id="KW-0560">Oxidoreductase</keyword>
<reference key="1">
    <citation type="journal article" date="2012" name="Planta">
        <title>Cloning and selection of carotenoid ketolase genes for the engineering of high-yield astaxanthin in plants.</title>
        <authorList>
            <person name="Huang J."/>
            <person name="Zhong Y."/>
            <person name="Sandmann G."/>
            <person name="Liu J."/>
            <person name="Chen F."/>
        </authorList>
    </citation>
    <scope>NUCLEOTIDE SEQUENCE [MRNA]</scope>
    <scope>FUNCTION</scope>
    <scope>CATALYTIC ACTIVITY</scope>
</reference>
<accession>G3F5K2</accession>
<dbReference type="EC" id="1.14.99.63" evidence="2"/>
<dbReference type="EMBL" id="JF451849">
    <property type="protein sequence ID" value="AEM45621.1"/>
    <property type="molecule type" value="mRNA"/>
</dbReference>
<dbReference type="GO" id="GO:0016020">
    <property type="term" value="C:membrane"/>
    <property type="evidence" value="ECO:0007669"/>
    <property type="project" value="TreeGrafter"/>
</dbReference>
<dbReference type="GO" id="GO:0016705">
    <property type="term" value="F:oxidoreductase activity, acting on paired donors, with incorporation or reduction of molecular oxygen"/>
    <property type="evidence" value="ECO:0000314"/>
    <property type="project" value="UniProtKB"/>
</dbReference>
<dbReference type="GO" id="GO:0016717">
    <property type="term" value="F:oxidoreductase activity, acting on paired donors, with oxidation of a pair of donors resulting in the reduction of molecular oxygen to two molecules of water"/>
    <property type="evidence" value="ECO:0007669"/>
    <property type="project" value="TreeGrafter"/>
</dbReference>
<dbReference type="GO" id="GO:0016117">
    <property type="term" value="P:carotenoid biosynthetic process"/>
    <property type="evidence" value="ECO:0000314"/>
    <property type="project" value="UniProtKB"/>
</dbReference>
<dbReference type="InterPro" id="IPR005804">
    <property type="entry name" value="FA_desaturase_dom"/>
</dbReference>
<dbReference type="InterPro" id="IPR012171">
    <property type="entry name" value="Fatty_acid_desaturase"/>
</dbReference>
<dbReference type="PANTHER" id="PTHR19353:SF19">
    <property type="entry name" value="DELTA(5) FATTY ACID DESATURASE C-RELATED"/>
    <property type="match status" value="1"/>
</dbReference>
<dbReference type="PANTHER" id="PTHR19353">
    <property type="entry name" value="FATTY ACID DESATURASE 2"/>
    <property type="match status" value="1"/>
</dbReference>
<dbReference type="Pfam" id="PF00487">
    <property type="entry name" value="FA_desaturase"/>
    <property type="match status" value="1"/>
</dbReference>
<organism>
    <name type="scientific">Protosiphon botryoides</name>
    <name type="common">Green alga</name>
    <dbReference type="NCBI Taxonomy" id="44656"/>
    <lineage>
        <taxon>Eukaryota</taxon>
        <taxon>Viridiplantae</taxon>
        <taxon>Chlorophyta</taxon>
        <taxon>core chlorophytes</taxon>
        <taxon>Chlorophyceae</taxon>
        <taxon>Protosiphonales</taxon>
        <taxon>Protosiphonaceae</taxon>
        <taxon>Protosiphon</taxon>
    </lineage>
</organism>
<feature type="chain" id="PRO_0000452213" description="Beta-carotene 4-ketolase">
    <location>
        <begin position="1"/>
        <end position="387"/>
    </location>
</feature>
<feature type="region of interest" description="Disordered" evidence="1">
    <location>
        <begin position="1"/>
        <end position="78"/>
    </location>
</feature>
<feature type="compositionally biased region" description="Polar residues" evidence="1">
    <location>
        <begin position="43"/>
        <end position="53"/>
    </location>
</feature>
<feature type="compositionally biased region" description="Polar residues" evidence="1">
    <location>
        <begin position="65"/>
        <end position="78"/>
    </location>
</feature>
<protein>
    <recommendedName>
        <fullName evidence="3">Beta-carotene 4-ketolase</fullName>
        <shortName evidence="3">PbBKT</shortName>
        <ecNumber evidence="2">1.14.99.63</ecNumber>
    </recommendedName>
</protein>
<gene>
    <name evidence="3" type="primary">BKT</name>
</gene>
<evidence type="ECO:0000256" key="1">
    <source>
        <dbReference type="SAM" id="MobiDB-lite"/>
    </source>
</evidence>
<evidence type="ECO:0000269" key="2">
    <source>
    </source>
</evidence>
<evidence type="ECO:0000303" key="3">
    <source>
    </source>
</evidence>
<evidence type="ECO:0000305" key="4"/>
<name>BKT_PROBT</name>